<comment type="similarity">
    <text evidence="2">Belongs to the PITHD1 family.</text>
</comment>
<protein>
    <recommendedName>
        <fullName>PITH domain-containing protein GA19395</fullName>
    </recommendedName>
</protein>
<accession>Q29L80</accession>
<proteinExistence type="inferred from homology"/>
<sequence length="211" mass="23861">MPHGHSHDHGGCGHEATDVDHALEMGIEYSLYTKIDAENLECLNEETEGSGKTVFKPYESRQDMSKFVQSDADEELLFNIPFTGNIKLKGIIICGANDDSHPNKVKIFKNRPKMTFDDAKVKVDQEFELTRDPRGEIEYSPKVVNFSSVHHLTLYFPSNFGDDKTRIYYIGLRGEFSEAHYHGVTICNYEARANAADHKDKVFDGVGRAIQ</sequence>
<evidence type="ECO:0000255" key="1">
    <source>
        <dbReference type="PROSITE-ProRule" id="PRU00864"/>
    </source>
</evidence>
<evidence type="ECO:0000305" key="2"/>
<reference key="1">
    <citation type="journal article" date="2005" name="Genome Res.">
        <title>Comparative genome sequencing of Drosophila pseudoobscura: chromosomal, gene, and cis-element evolution.</title>
        <authorList>
            <person name="Richards S."/>
            <person name="Liu Y."/>
            <person name="Bettencourt B.R."/>
            <person name="Hradecky P."/>
            <person name="Letovsky S."/>
            <person name="Nielsen R."/>
            <person name="Thornton K."/>
            <person name="Hubisz M.J."/>
            <person name="Chen R."/>
            <person name="Meisel R.P."/>
            <person name="Couronne O."/>
            <person name="Hua S."/>
            <person name="Smith M.A."/>
            <person name="Zhang P."/>
            <person name="Liu J."/>
            <person name="Bussemaker H.J."/>
            <person name="van Batenburg M.F."/>
            <person name="Howells S.L."/>
            <person name="Scherer S.E."/>
            <person name="Sodergren E."/>
            <person name="Matthews B.B."/>
            <person name="Crosby M.A."/>
            <person name="Schroeder A.J."/>
            <person name="Ortiz-Barrientos D."/>
            <person name="Rives C.M."/>
            <person name="Metzker M.L."/>
            <person name="Muzny D.M."/>
            <person name="Scott G."/>
            <person name="Steffen D."/>
            <person name="Wheeler D.A."/>
            <person name="Worley K.C."/>
            <person name="Havlak P."/>
            <person name="Durbin K.J."/>
            <person name="Egan A."/>
            <person name="Gill R."/>
            <person name="Hume J."/>
            <person name="Morgan M.B."/>
            <person name="Miner G."/>
            <person name="Hamilton C."/>
            <person name="Huang Y."/>
            <person name="Waldron L."/>
            <person name="Verduzco D."/>
            <person name="Clerc-Blankenburg K.P."/>
            <person name="Dubchak I."/>
            <person name="Noor M.A.F."/>
            <person name="Anderson W."/>
            <person name="White K.P."/>
            <person name="Clark A.G."/>
            <person name="Schaeffer S.W."/>
            <person name="Gelbart W.M."/>
            <person name="Weinstock G.M."/>
            <person name="Gibbs R.A."/>
        </authorList>
    </citation>
    <scope>NUCLEOTIDE SEQUENCE [LARGE SCALE GENOMIC DNA]</scope>
    <source>
        <strain>MV2-25 / Tucson 14011-0121.94</strain>
    </source>
</reference>
<keyword id="KW-1185">Reference proteome</keyword>
<dbReference type="EMBL" id="CH379061">
    <property type="protein sequence ID" value="EAL32944.1"/>
    <property type="molecule type" value="Genomic_DNA"/>
</dbReference>
<dbReference type="SMR" id="Q29L80"/>
<dbReference type="FunCoup" id="Q29L80">
    <property type="interactions" value="2301"/>
</dbReference>
<dbReference type="EnsemblMetazoa" id="FBtr0289244">
    <property type="protein sequence ID" value="FBpp0287682"/>
    <property type="gene ID" value="FBgn0079392"/>
</dbReference>
<dbReference type="KEGG" id="dpo:4816496"/>
<dbReference type="eggNOG" id="KOG1730">
    <property type="taxonomic scope" value="Eukaryota"/>
</dbReference>
<dbReference type="HOGENOM" id="CLU_072377_2_0_1"/>
<dbReference type="InParanoid" id="Q29L80"/>
<dbReference type="OMA" id="RLVFKPW"/>
<dbReference type="PhylomeDB" id="Q29L80"/>
<dbReference type="Proteomes" id="UP000001819">
    <property type="component" value="Chromosome 4"/>
</dbReference>
<dbReference type="Bgee" id="FBgn0079392">
    <property type="expression patterns" value="Expressed in male reproductive system and 3 other cell types or tissues"/>
</dbReference>
<dbReference type="GO" id="GO:0005737">
    <property type="term" value="C:cytoplasm"/>
    <property type="evidence" value="ECO:0007669"/>
    <property type="project" value="UniProtKB-ARBA"/>
</dbReference>
<dbReference type="GO" id="GO:0005634">
    <property type="term" value="C:nucleus"/>
    <property type="evidence" value="ECO:0007669"/>
    <property type="project" value="TreeGrafter"/>
</dbReference>
<dbReference type="FunFam" id="2.60.120.470:FF:000002">
    <property type="entry name" value="PITH domain-containing protein 1"/>
    <property type="match status" value="1"/>
</dbReference>
<dbReference type="Gene3D" id="2.60.120.470">
    <property type="entry name" value="PITH domain"/>
    <property type="match status" value="1"/>
</dbReference>
<dbReference type="InterPro" id="IPR008979">
    <property type="entry name" value="Galactose-bd-like_sf"/>
</dbReference>
<dbReference type="InterPro" id="IPR045099">
    <property type="entry name" value="PITH1-like"/>
</dbReference>
<dbReference type="InterPro" id="IPR010400">
    <property type="entry name" value="PITH_dom"/>
</dbReference>
<dbReference type="InterPro" id="IPR037047">
    <property type="entry name" value="PITH_dom_sf"/>
</dbReference>
<dbReference type="PANTHER" id="PTHR12175">
    <property type="entry name" value="AD039 HT014 THIOREDOXIN FAMILY TRP26"/>
    <property type="match status" value="1"/>
</dbReference>
<dbReference type="PANTHER" id="PTHR12175:SF1">
    <property type="entry name" value="PITH DOMAIN-CONTAINING PROTEIN 1"/>
    <property type="match status" value="1"/>
</dbReference>
<dbReference type="Pfam" id="PF06201">
    <property type="entry name" value="PITH"/>
    <property type="match status" value="1"/>
</dbReference>
<dbReference type="SUPFAM" id="SSF49785">
    <property type="entry name" value="Galactose-binding domain-like"/>
    <property type="match status" value="1"/>
</dbReference>
<dbReference type="PROSITE" id="PS51532">
    <property type="entry name" value="PITH"/>
    <property type="match status" value="1"/>
</dbReference>
<name>PITH1_DROPS</name>
<organism>
    <name type="scientific">Drosophila pseudoobscura pseudoobscura</name>
    <name type="common">Fruit fly</name>
    <dbReference type="NCBI Taxonomy" id="46245"/>
    <lineage>
        <taxon>Eukaryota</taxon>
        <taxon>Metazoa</taxon>
        <taxon>Ecdysozoa</taxon>
        <taxon>Arthropoda</taxon>
        <taxon>Hexapoda</taxon>
        <taxon>Insecta</taxon>
        <taxon>Pterygota</taxon>
        <taxon>Neoptera</taxon>
        <taxon>Endopterygota</taxon>
        <taxon>Diptera</taxon>
        <taxon>Brachycera</taxon>
        <taxon>Muscomorpha</taxon>
        <taxon>Ephydroidea</taxon>
        <taxon>Drosophilidae</taxon>
        <taxon>Drosophila</taxon>
        <taxon>Sophophora</taxon>
    </lineage>
</organism>
<feature type="chain" id="PRO_0000285037" description="PITH domain-containing protein GA19395">
    <location>
        <begin position="1"/>
        <end position="211"/>
    </location>
</feature>
<feature type="domain" description="PITH" evidence="1">
    <location>
        <begin position="20"/>
        <end position="192"/>
    </location>
</feature>
<gene>
    <name type="ORF">GA19395</name>
</gene>